<accession>Q6DRL5</accession>
<accession>Q6PEG6</accession>
<comment type="function">
    <text evidence="1">May activate or repress transcription via interactions with sequence specific DNA-binding proteins. May play a role in the repression of the circadian clock gene expression.</text>
</comment>
<comment type="subcellular location">
    <subcellularLocation>
        <location evidence="1">Nucleus</location>
        <location evidence="1">Nucleolus</location>
    </subcellularLocation>
</comment>
<comment type="similarity">
    <text evidence="4">Belongs to the MYBBP1A family.</text>
</comment>
<comment type="sequence caution" evidence="4">
    <conflict type="miscellaneous discrepancy">
        <sequence resource="EMBL-CDS" id="AAH58070"/>
    </conflict>
    <text>Contaminating sequence. Potential poly-A sequence.</text>
</comment>
<reference key="1">
    <citation type="journal article" date="2004" name="Proc. Natl. Acad. Sci. U.S.A.">
        <title>Identification of 315 genes essential for early zebrafish development.</title>
        <authorList>
            <person name="Amsterdam A."/>
            <person name="Nissen R.M."/>
            <person name="Sun Z."/>
            <person name="Swindell E.C."/>
            <person name="Farrington S."/>
            <person name="Hopkins N."/>
        </authorList>
    </citation>
    <scope>NUCLEOTIDE SEQUENCE [LARGE SCALE MRNA]</scope>
</reference>
<reference key="2">
    <citation type="submission" date="2004-07" db="EMBL/GenBank/DDBJ databases">
        <authorList>
            <consortium name="NIH - Zebrafish Gene Collection (ZGC) project"/>
        </authorList>
    </citation>
    <scope>NUCLEOTIDE SEQUENCE [LARGE SCALE MRNA] OF 1-650</scope>
    <source>
        <tissue>Embryo</tissue>
    </source>
</reference>
<reference key="3">
    <citation type="journal article" date="2008" name="J. Proteome Res.">
        <title>Online automated in vivo zebrafish phosphoproteomics: from large-scale analysis down to a single embryo.</title>
        <authorList>
            <person name="Lemeer S."/>
            <person name="Pinkse M.W.H."/>
            <person name="Mohammed S."/>
            <person name="van Breukelen B."/>
            <person name="den Hertog J."/>
            <person name="Slijper M."/>
            <person name="Heck A.J.R."/>
        </authorList>
    </citation>
    <scope>PHOSPHORYLATION [LARGE SCALE ANALYSIS] AT SER-810</scope>
    <scope>IDENTIFICATION BY MASS SPECTROMETRY</scope>
    <source>
        <tissue>Embryo</tissue>
    </source>
</reference>
<organism>
    <name type="scientific">Danio rerio</name>
    <name type="common">Zebrafish</name>
    <name type="synonym">Brachydanio rerio</name>
    <dbReference type="NCBI Taxonomy" id="7955"/>
    <lineage>
        <taxon>Eukaryota</taxon>
        <taxon>Metazoa</taxon>
        <taxon>Chordata</taxon>
        <taxon>Craniata</taxon>
        <taxon>Vertebrata</taxon>
        <taxon>Euteleostomi</taxon>
        <taxon>Actinopterygii</taxon>
        <taxon>Neopterygii</taxon>
        <taxon>Teleostei</taxon>
        <taxon>Ostariophysi</taxon>
        <taxon>Cypriniformes</taxon>
        <taxon>Danionidae</taxon>
        <taxon>Danioninae</taxon>
        <taxon>Danio</taxon>
    </lineage>
</organism>
<sequence>MVAVMQTDMGETENSAVRPKVTDAKGILKQNRQFLDYFWDIAKPDRQIRLKAIEDLINYLKNSEQADELKYTLKRLVDGLSHTREDARSGYSVALAQLLSVFEEISLKSTLNSVKEKHNLLTASKKLIRNAVFGNFFGVLALSQSTRLHKEPQVMLECVQLLQSLSEYREHLRDLPRKTMVDILSETSQDVFEEVLFSALQSDLTSALKSPEQLELLLVALQKFPSVLKPKKLKKLLGTTAVITKQNMPRLVEVLKTAARSVKKENILPAVALDLLQVSLREDNFEMFWTDAIITGMMSEMPGPTHYLSFRLLGASLPLLSIPQLQFVLSGDVMRQYGEHTMSAQMPDRFKFAPEMAGYVGEFMQSCTDPDKQLVVVLGFTQLTNQGNPVVPSYWKALENMHPSAVQRYVDWLIEAFCKPQLENCLDFSTRRQKGNQEAAVESESCVSRFRKWIIPRLTFIVENQQIKKQEALVMKVVRFIFFHAFFEVKKPTSEIPETTQALSVPINQQTRTAVVSGFYSLLQALNSMMVLGESVEVQGLNFRRIVGVQADGSMWIYSVFQFASMLLNQNKYVKSLQSFSPEQRQGWDSVLESVEALRKKAKTASSPEHTAFQQLFLLIGIQMFTSPEESLDLLKDLQTCMEKAQAKKSKKKKATDEPHWVEVIVEILLSLVSQPSRLVRSVCKTVFGRICPHLTQAALSSILNVLDPNKDEDESGVVVTDDKKRKLKEEDEDDDDEEEDDDNDEGDDDDDDDDEEEGGEEGEESSDSSDDEEEDEAMEEGQEVDQNFRLELMKVLQGQNALATEEDGSDDEELDDAAMMKLDGSLASLFLEQRKKIQAKKDEKDRLNKEKGLVRDFKIKVLDMVEVFLSKQGFSPLVLGMVEPLLSVIENGMSSESSQPEQDYLRRVADIFRNRLCRGKFYCKEIDGREAELHEMLERLIGRAQKLTDSSVALYYFSAALYVLKVLRGSVVDQELSTMGKVEVERATTCLKNALTSFMTKRKSPLTGAMFIDLFHRFPVLCVNLMDTALENITAGLRDHQQGQACFIMLKALQCKHVKNLMTGEQTTELYKKVVDQLTKSLENVQCKNKTAHDKVVKALELCLHVVKIVLNQKMRVNLELLQDVLASMNAEGCLEKTGKLEDTYWSVMRLFGVIKPKMEKVKKVPEAEQTEETTKKKKGFLPETKKRKNRKKPTILEGKETETPVEKTPEGASGEGKKNKNKKKNKKRKQQAGEETQDQPTPKKAKMQQQQQQKQKKKKKKKGADGE</sequence>
<evidence type="ECO:0000250" key="1">
    <source>
        <dbReference type="UniProtKB" id="Q7TPV4"/>
    </source>
</evidence>
<evidence type="ECO:0000256" key="2">
    <source>
        <dbReference type="SAM" id="MobiDB-lite"/>
    </source>
</evidence>
<evidence type="ECO:0000269" key="3">
    <source>
    </source>
</evidence>
<evidence type="ECO:0000305" key="4"/>
<protein>
    <recommendedName>
        <fullName>Myb-binding protein 1A-like protein</fullName>
    </recommendedName>
</protein>
<name>MBB1A_DANRE</name>
<gene>
    <name type="primary">mybbp1a</name>
</gene>
<keyword id="KW-0010">Activator</keyword>
<keyword id="KW-0090">Biological rhythms</keyword>
<keyword id="KW-0539">Nucleus</keyword>
<keyword id="KW-0597">Phosphoprotein</keyword>
<keyword id="KW-1185">Reference proteome</keyword>
<keyword id="KW-0678">Repressor</keyword>
<keyword id="KW-0804">Transcription</keyword>
<keyword id="KW-0805">Transcription regulation</keyword>
<dbReference type="EMBL" id="AY648744">
    <property type="protein sequence ID" value="AAT68062.1"/>
    <property type="molecule type" value="mRNA"/>
</dbReference>
<dbReference type="EMBL" id="BC058070">
    <property type="protein sequence ID" value="AAH58070.1"/>
    <property type="status" value="ALT_SEQ"/>
    <property type="molecule type" value="mRNA"/>
</dbReference>
<dbReference type="FunCoup" id="Q6DRL5">
    <property type="interactions" value="1504"/>
</dbReference>
<dbReference type="STRING" id="7955.ENSDARP00000133844"/>
<dbReference type="iPTMnet" id="Q6DRL5"/>
<dbReference type="PaxDb" id="7955-ENSDARP00000028271"/>
<dbReference type="AGR" id="ZFIN:ZDB-GENE-030131-9864"/>
<dbReference type="ZFIN" id="ZDB-GENE-030131-9864">
    <property type="gene designation" value="mybbp1a"/>
</dbReference>
<dbReference type="eggNOG" id="KOG1926">
    <property type="taxonomic scope" value="Eukaryota"/>
</dbReference>
<dbReference type="InParanoid" id="Q6DRL5"/>
<dbReference type="PhylomeDB" id="Q6DRL5"/>
<dbReference type="PRO" id="PR:Q6DRL5"/>
<dbReference type="Proteomes" id="UP000000437">
    <property type="component" value="Unplaced"/>
</dbReference>
<dbReference type="GO" id="GO:0005730">
    <property type="term" value="C:nucleolus"/>
    <property type="evidence" value="ECO:0000318"/>
    <property type="project" value="GO_Central"/>
</dbReference>
<dbReference type="GO" id="GO:0043565">
    <property type="term" value="F:sequence-specific DNA binding"/>
    <property type="evidence" value="ECO:0000318"/>
    <property type="project" value="GO_Central"/>
</dbReference>
<dbReference type="GO" id="GO:0003714">
    <property type="term" value="F:transcription corepressor activity"/>
    <property type="evidence" value="ECO:0000318"/>
    <property type="project" value="GO_Central"/>
</dbReference>
<dbReference type="GO" id="GO:0048511">
    <property type="term" value="P:rhythmic process"/>
    <property type="evidence" value="ECO:0007669"/>
    <property type="project" value="UniProtKB-KW"/>
</dbReference>
<dbReference type="InterPro" id="IPR016024">
    <property type="entry name" value="ARM-type_fold"/>
</dbReference>
<dbReference type="InterPro" id="IPR007015">
    <property type="entry name" value="DNA_pol_V/MYBBP1A"/>
</dbReference>
<dbReference type="PANTHER" id="PTHR13213:SF2">
    <property type="entry name" value="MYB-BINDING PROTEIN 1A"/>
    <property type="match status" value="1"/>
</dbReference>
<dbReference type="PANTHER" id="PTHR13213">
    <property type="entry name" value="MYB-BINDING PROTEIN 1A FAMILY MEMBER"/>
    <property type="match status" value="1"/>
</dbReference>
<dbReference type="Pfam" id="PF04931">
    <property type="entry name" value="DNA_pol_phi"/>
    <property type="match status" value="1"/>
</dbReference>
<dbReference type="SUPFAM" id="SSF48371">
    <property type="entry name" value="ARM repeat"/>
    <property type="match status" value="1"/>
</dbReference>
<feature type="chain" id="PRO_0000096254" description="Myb-binding protein 1A-like protein">
    <location>
        <begin position="1"/>
        <end position="1269"/>
    </location>
</feature>
<feature type="region of interest" description="Disordered" evidence="2">
    <location>
        <begin position="708"/>
        <end position="783"/>
    </location>
</feature>
<feature type="region of interest" description="Disordered" evidence="2">
    <location>
        <begin position="1163"/>
        <end position="1269"/>
    </location>
</feature>
<feature type="compositionally biased region" description="Basic and acidic residues" evidence="2">
    <location>
        <begin position="721"/>
        <end position="730"/>
    </location>
</feature>
<feature type="compositionally biased region" description="Acidic residues" evidence="2">
    <location>
        <begin position="731"/>
        <end position="783"/>
    </location>
</feature>
<feature type="compositionally biased region" description="Basic residues" evidence="2">
    <location>
        <begin position="1177"/>
        <end position="1195"/>
    </location>
</feature>
<feature type="compositionally biased region" description="Basic and acidic residues" evidence="2">
    <location>
        <begin position="1199"/>
        <end position="1211"/>
    </location>
</feature>
<feature type="compositionally biased region" description="Basic residues" evidence="2">
    <location>
        <begin position="1221"/>
        <end position="1232"/>
    </location>
</feature>
<feature type="compositionally biased region" description="Basic residues" evidence="2">
    <location>
        <begin position="1256"/>
        <end position="1269"/>
    </location>
</feature>
<feature type="modified residue" description="Phosphoserine" evidence="3">
    <location>
        <position position="810"/>
    </location>
</feature>
<feature type="sequence conflict" description="In Ref. 2; AAH58070." evidence="4" ref="2">
    <original>E</original>
    <variation>G</variation>
    <location>
        <position position="11"/>
    </location>
</feature>
<feature type="sequence conflict" description="In Ref. 2; AAH58070." evidence="4" ref="2">
    <original>D</original>
    <variation>N</variation>
    <location>
        <position position="55"/>
    </location>
</feature>
<feature type="sequence conflict" description="In Ref. 2; AAH58070." evidence="4" ref="2">
    <original>L</original>
    <variation>P</variation>
    <location>
        <position position="325"/>
    </location>
</feature>
<feature type="sequence conflict" description="In Ref. 2; AAH58070." evidence="4" ref="2">
    <original>IVE</original>
    <variation>MVD</variation>
    <location>
        <begin position="461"/>
        <end position="463"/>
    </location>
</feature>
<feature type="sequence conflict" description="In Ref. 2; AAH58070." evidence="4" ref="2">
    <original>V</original>
    <variation>I</variation>
    <location>
        <position position="516"/>
    </location>
</feature>
<proteinExistence type="evidence at protein level"/>